<sequence>MTISFKGLARGVACAALVLAALPAAAKEFRLGLITPPPHTWTKAAEAFGAELSEKSGGAHSVSVFPARQLGNEAQMLQQLQTGALDMAFMTVAEVSNRVPNMGAFYAPYLAGDINHAAAILRSDTARGMLAVLPQEAGVVGVGFGSAGMRQILSRGAVNSAADLSGLKLRITPFDPILDFYNALGAAPTPMPLPAVYDALANGQVDAIDMDVELINVLKYHEHADTILISNHMMFPMVGLISARVYAGMSDADKAMISELMAKHVDSTLDVYMVKEPEWTDALTKVGKTFKRVDQSFFGDAIAQWETIWADKAPSLPELRKTAADLQ</sequence>
<gene>
    <name evidence="4" type="primary">dctP</name>
    <name evidence="5" type="ordered locus">SPO1773</name>
</gene>
<dbReference type="EMBL" id="CP000031">
    <property type="protein sequence ID" value="AAV95052.1"/>
    <property type="molecule type" value="Genomic_DNA"/>
</dbReference>
<dbReference type="RefSeq" id="WP_011047506.1">
    <property type="nucleotide sequence ID" value="NC_003911.12"/>
</dbReference>
<dbReference type="PDB" id="4PAF">
    <property type="method" value="X-ray"/>
    <property type="resolution" value="1.60 A"/>
    <property type="chains" value="A=1-327"/>
</dbReference>
<dbReference type="PDB" id="4PAI">
    <property type="method" value="X-ray"/>
    <property type="resolution" value="1.40 A"/>
    <property type="chains" value="A=1-327"/>
</dbReference>
<dbReference type="PDB" id="4PBH">
    <property type="method" value="X-ray"/>
    <property type="resolution" value="1.20 A"/>
    <property type="chains" value="A=1-327"/>
</dbReference>
<dbReference type="PDBsum" id="4PAF"/>
<dbReference type="PDBsum" id="4PAI"/>
<dbReference type="PDBsum" id="4PBH"/>
<dbReference type="SMR" id="Q5LSJ5"/>
<dbReference type="STRING" id="246200.SPO1773"/>
<dbReference type="PaxDb" id="246200-SPO1773"/>
<dbReference type="KEGG" id="sil:SPO1773"/>
<dbReference type="eggNOG" id="COG1638">
    <property type="taxonomic scope" value="Bacteria"/>
</dbReference>
<dbReference type="HOGENOM" id="CLU_036176_4_0_5"/>
<dbReference type="OrthoDB" id="9803763at2"/>
<dbReference type="EvolutionaryTrace" id="Q5LSJ5"/>
<dbReference type="Proteomes" id="UP000001023">
    <property type="component" value="Chromosome"/>
</dbReference>
<dbReference type="GO" id="GO:0030288">
    <property type="term" value="C:outer membrane-bounded periplasmic space"/>
    <property type="evidence" value="ECO:0000304"/>
    <property type="project" value="TIGR"/>
</dbReference>
<dbReference type="GO" id="GO:0030246">
    <property type="term" value="F:carbohydrate binding"/>
    <property type="evidence" value="ECO:0007669"/>
    <property type="project" value="TreeGrafter"/>
</dbReference>
<dbReference type="GO" id="GO:0015740">
    <property type="term" value="P:C4-dicarboxylate transport"/>
    <property type="evidence" value="ECO:0000304"/>
    <property type="project" value="TIGR"/>
</dbReference>
<dbReference type="GO" id="GO:0055085">
    <property type="term" value="P:transmembrane transport"/>
    <property type="evidence" value="ECO:0007669"/>
    <property type="project" value="InterPro"/>
</dbReference>
<dbReference type="CDD" id="cd13603">
    <property type="entry name" value="PBP2_TRAP_Siap_TeaA_like"/>
    <property type="match status" value="1"/>
</dbReference>
<dbReference type="Gene3D" id="3.40.190.170">
    <property type="entry name" value="Bacterial extracellular solute-binding protein, family 7"/>
    <property type="match status" value="1"/>
</dbReference>
<dbReference type="InterPro" id="IPR018389">
    <property type="entry name" value="DctP_fam"/>
</dbReference>
<dbReference type="InterPro" id="IPR038404">
    <property type="entry name" value="TRAP_DctP_sf"/>
</dbReference>
<dbReference type="NCBIfam" id="NF037995">
    <property type="entry name" value="TRAP_S1"/>
    <property type="match status" value="1"/>
</dbReference>
<dbReference type="PANTHER" id="PTHR33376">
    <property type="match status" value="1"/>
</dbReference>
<dbReference type="PANTHER" id="PTHR33376:SF2">
    <property type="entry name" value="DICARBOXYLATE-BINDING PERIPLASMIC PROTEIN"/>
    <property type="match status" value="1"/>
</dbReference>
<dbReference type="Pfam" id="PF03480">
    <property type="entry name" value="DctP"/>
    <property type="match status" value="1"/>
</dbReference>
<dbReference type="SUPFAM" id="SSF53850">
    <property type="entry name" value="Periplasmic binding protein-like II"/>
    <property type="match status" value="1"/>
</dbReference>
<keyword id="KW-0002">3D-structure</keyword>
<keyword id="KW-0574">Periplasm</keyword>
<keyword id="KW-1185">Reference proteome</keyword>
<keyword id="KW-0732">Signal</keyword>
<keyword id="KW-0813">Transport</keyword>
<comment type="function">
    <text evidence="3 4">Solute-binding protein that binds 3,4-dihydroxybenzoate and 3-hydroxybenzoate (in vitro) (PubMed:25540822). Probably part of a tripartite ATP-independent periplasmic (TRAP) transport system that mediates solute transport into the cytoplasm.</text>
</comment>
<comment type="subunit">
    <text evidence="1">The complex is comprised of an extracytoplasmic solute-binding protein and a heteromeric permease formed by two transmembrane proteins.</text>
</comment>
<comment type="subcellular location">
    <subcellularLocation>
        <location evidence="1">Periplasm</location>
    </subcellularLocation>
</comment>
<comment type="similarity">
    <text evidence="4">Belongs to the bacterial solute-binding protein 7 family.</text>
</comment>
<protein>
    <recommendedName>
        <fullName evidence="4">Solute-binding protein SPO1773</fullName>
    </recommendedName>
</protein>
<feature type="signal peptide" evidence="2">
    <location>
        <begin position="1"/>
        <end position="26"/>
    </location>
</feature>
<feature type="chain" id="PRO_5004259607" description="Solute-binding protein SPO1773">
    <location>
        <begin position="27"/>
        <end position="327"/>
    </location>
</feature>
<feature type="binding site" evidence="6 7">
    <location>
        <begin position="39"/>
        <end position="41"/>
    </location>
    <ligand>
        <name>3-hydroxybenzoate</name>
        <dbReference type="ChEBI" id="CHEBI:16193"/>
    </ligand>
</feature>
<feature type="binding site" evidence="6 7">
    <location>
        <position position="150"/>
    </location>
    <ligand>
        <name>3-hydroxybenzoate</name>
        <dbReference type="ChEBI" id="CHEBI:16193"/>
    </ligand>
</feature>
<feature type="binding site" evidence="6 7">
    <location>
        <begin position="170"/>
        <end position="172"/>
    </location>
    <ligand>
        <name>3-hydroxybenzoate</name>
        <dbReference type="ChEBI" id="CHEBI:16193"/>
    </ligand>
</feature>
<feature type="binding site" evidence="6 7">
    <location>
        <position position="211"/>
    </location>
    <ligand>
        <name>3-hydroxybenzoate</name>
        <dbReference type="ChEBI" id="CHEBI:16193"/>
    </ligand>
</feature>
<feature type="strand" evidence="9">
    <location>
        <begin position="28"/>
        <end position="32"/>
    </location>
</feature>
<feature type="helix" evidence="9">
    <location>
        <begin position="40"/>
        <end position="55"/>
    </location>
</feature>
<feature type="turn" evidence="9">
    <location>
        <begin position="56"/>
        <end position="58"/>
    </location>
</feature>
<feature type="strand" evidence="9">
    <location>
        <begin position="61"/>
        <end position="65"/>
    </location>
</feature>
<feature type="turn" evidence="9">
    <location>
        <begin position="67"/>
        <end position="70"/>
    </location>
</feature>
<feature type="helix" evidence="9">
    <location>
        <begin position="73"/>
        <end position="82"/>
    </location>
</feature>
<feature type="strand" evidence="9">
    <location>
        <begin position="83"/>
        <end position="85"/>
    </location>
</feature>
<feature type="strand" evidence="9">
    <location>
        <begin position="87"/>
        <end position="91"/>
    </location>
</feature>
<feature type="helix" evidence="9">
    <location>
        <begin position="92"/>
        <end position="98"/>
    </location>
</feature>
<feature type="helix" evidence="9">
    <location>
        <begin position="100"/>
        <end position="106"/>
    </location>
</feature>
<feature type="strand" evidence="9">
    <location>
        <begin position="110"/>
        <end position="113"/>
    </location>
</feature>
<feature type="helix" evidence="9">
    <location>
        <begin position="114"/>
        <end position="122"/>
    </location>
</feature>
<feature type="helix" evidence="9">
    <location>
        <begin position="124"/>
        <end position="129"/>
    </location>
</feature>
<feature type="helix" evidence="9">
    <location>
        <begin position="130"/>
        <end position="132"/>
    </location>
</feature>
<feature type="helix" evidence="9">
    <location>
        <begin position="133"/>
        <end position="137"/>
    </location>
</feature>
<feature type="strand" evidence="9">
    <location>
        <begin position="138"/>
        <end position="146"/>
    </location>
</feature>
<feature type="strand" evidence="9">
    <location>
        <begin position="151"/>
        <end position="156"/>
    </location>
</feature>
<feature type="helix" evidence="9">
    <location>
        <begin position="161"/>
        <end position="164"/>
    </location>
</feature>
<feature type="strand" evidence="9">
    <location>
        <begin position="168"/>
        <end position="171"/>
    </location>
</feature>
<feature type="helix" evidence="9">
    <location>
        <begin position="175"/>
        <end position="184"/>
    </location>
</feature>
<feature type="strand" evidence="9">
    <location>
        <begin position="187"/>
        <end position="190"/>
    </location>
</feature>
<feature type="helix" evidence="9">
    <location>
        <begin position="193"/>
        <end position="195"/>
    </location>
</feature>
<feature type="helix" evidence="9">
    <location>
        <begin position="196"/>
        <end position="201"/>
    </location>
</feature>
<feature type="strand" evidence="9">
    <location>
        <begin position="206"/>
        <end position="210"/>
    </location>
</feature>
<feature type="helix" evidence="9">
    <location>
        <begin position="212"/>
        <end position="217"/>
    </location>
</feature>
<feature type="helix" evidence="9">
    <location>
        <begin position="220"/>
        <end position="223"/>
    </location>
</feature>
<feature type="strand" evidence="9">
    <location>
        <begin position="225"/>
        <end position="229"/>
    </location>
</feature>
<feature type="strand" evidence="9">
    <location>
        <begin position="236"/>
        <end position="242"/>
    </location>
</feature>
<feature type="helix" evidence="9">
    <location>
        <begin position="243"/>
        <end position="248"/>
    </location>
</feature>
<feature type="helix" evidence="9">
    <location>
        <begin position="251"/>
        <end position="282"/>
    </location>
</feature>
<feature type="strand" evidence="9">
    <location>
        <begin position="285"/>
        <end position="292"/>
    </location>
</feature>
<feature type="helix" evidence="9">
    <location>
        <begin position="295"/>
        <end position="300"/>
    </location>
</feature>
<feature type="helix" evidence="9">
    <location>
        <begin position="301"/>
        <end position="309"/>
    </location>
</feature>
<feature type="turn" evidence="9">
    <location>
        <begin position="310"/>
        <end position="312"/>
    </location>
</feature>
<feature type="helix" evidence="9">
    <location>
        <begin position="316"/>
        <end position="327"/>
    </location>
</feature>
<name>DCTP_RUEPO</name>
<accession>Q5LSJ5</accession>
<reference key="1">
    <citation type="journal article" date="2004" name="Nature">
        <title>Genome sequence of Silicibacter pomeroyi reveals adaptations to the marine environment.</title>
        <authorList>
            <person name="Moran M.A."/>
            <person name="Buchan A."/>
            <person name="Gonzalez J.M."/>
            <person name="Heidelberg J.F."/>
            <person name="Whitman W.B."/>
            <person name="Kiene R.P."/>
            <person name="Henriksen J.R."/>
            <person name="King G.M."/>
            <person name="Belas R."/>
            <person name="Fuqua C."/>
            <person name="Brinkac L.M."/>
            <person name="Lewis M."/>
            <person name="Johri S."/>
            <person name="Weaver B."/>
            <person name="Pai G."/>
            <person name="Eisen J.A."/>
            <person name="Rahe E."/>
            <person name="Sheldon W.M."/>
            <person name="Ye W."/>
            <person name="Miller T.R."/>
            <person name="Carlton J."/>
            <person name="Rasko D.A."/>
            <person name="Paulsen I.T."/>
            <person name="Ren Q."/>
            <person name="Daugherty S.C."/>
            <person name="DeBoy R.T."/>
            <person name="Dodson R.J."/>
            <person name="Durkin A.S."/>
            <person name="Madupu R."/>
            <person name="Nelson W.C."/>
            <person name="Sullivan S.A."/>
            <person name="Rosovitz M.J."/>
            <person name="Haft D.H."/>
            <person name="Selengut J."/>
            <person name="Ward N."/>
        </authorList>
    </citation>
    <scope>NUCLEOTIDE SEQUENCE [LARGE SCALE GENOMIC DNA]</scope>
    <source>
        <strain>ATCC 700808 / DSM 15171 / DSS-3</strain>
    </source>
</reference>
<reference key="2">
    <citation type="journal article" date="2014" name="Stand. Genomic Sci.">
        <title>An updated genome annotation for the model marine bacterium Ruegeria pomeroyi DSS-3.</title>
        <authorList>
            <person name="Rivers A.R."/>
            <person name="Smith C.B."/>
            <person name="Moran M.A."/>
        </authorList>
    </citation>
    <scope>GENOME REANNOTATION</scope>
    <source>
        <strain>ATCC 700808 / DSM 15171 / DSS-3</strain>
    </source>
</reference>
<reference evidence="6 7 8" key="3">
    <citation type="journal article" date="2015" name="Biochemistry">
        <title>Experimental strategies for functional annotation and metabolism discovery: targeted screening of solute binding proteins and unbiased panning of metabolomes.</title>
        <authorList>
            <person name="Vetting M.W."/>
            <person name="Al-Obaidi N."/>
            <person name="Zhao S."/>
            <person name="San Francisco B."/>
            <person name="Kim J."/>
            <person name="Wichelecki D.J."/>
            <person name="Bouvier J.T."/>
            <person name="Solbiati J.O."/>
            <person name="Vu H."/>
            <person name="Zhang X."/>
            <person name="Rodionov D.A."/>
            <person name="Love J.D."/>
            <person name="Hillerich B.S."/>
            <person name="Seidel R.D."/>
            <person name="Quinn R.J."/>
            <person name="Osterman A.L."/>
            <person name="Cronan J.E."/>
            <person name="Jacobson M.P."/>
            <person name="Gerlt J.A."/>
            <person name="Almo S.C."/>
        </authorList>
    </citation>
    <scope>X-RAY CRYSTALLOGRAPHY (1.20 ANGSTROMS) IN COMPLEX WITH 3,4-DIHYDROXYBENZOATE AND 3-HYDROXYBENZOATE</scope>
    <scope>FUNCTION</scope>
</reference>
<organism evidence="5">
    <name type="scientific">Ruegeria pomeroyi (strain ATCC 700808 / DSM 15171 / DSS-3)</name>
    <name type="common">Silicibacter pomeroyi</name>
    <dbReference type="NCBI Taxonomy" id="246200"/>
    <lineage>
        <taxon>Bacteria</taxon>
        <taxon>Pseudomonadati</taxon>
        <taxon>Pseudomonadota</taxon>
        <taxon>Alphaproteobacteria</taxon>
        <taxon>Rhodobacterales</taxon>
        <taxon>Roseobacteraceae</taxon>
        <taxon>Ruegeria</taxon>
    </lineage>
</organism>
<proteinExistence type="evidence at protein level"/>
<evidence type="ECO:0000250" key="1">
    <source>
        <dbReference type="UniProtKB" id="P37735"/>
    </source>
</evidence>
<evidence type="ECO:0000255" key="2"/>
<evidence type="ECO:0000269" key="3">
    <source>
    </source>
</evidence>
<evidence type="ECO:0000305" key="4"/>
<evidence type="ECO:0000312" key="5">
    <source>
        <dbReference type="EMBL" id="AAV95052.1"/>
    </source>
</evidence>
<evidence type="ECO:0007744" key="6">
    <source>
        <dbReference type="PDB" id="4PAF"/>
    </source>
</evidence>
<evidence type="ECO:0007744" key="7">
    <source>
        <dbReference type="PDB" id="4PAI"/>
    </source>
</evidence>
<evidence type="ECO:0007744" key="8">
    <source>
        <dbReference type="PDB" id="4PBH"/>
    </source>
</evidence>
<evidence type="ECO:0007829" key="9">
    <source>
        <dbReference type="PDB" id="4PBH"/>
    </source>
</evidence>